<comment type="function">
    <text evidence="1">Involved in unsaturated fatty acids biosynthesis. Catalyzes the dehydration of short chain beta-hydroxyacyl-ACPs and long chain saturated and unsaturated beta-hydroxyacyl-ACPs.</text>
</comment>
<comment type="catalytic activity">
    <reaction evidence="1">
        <text>a (3R)-hydroxyacyl-[ACP] = a (2E)-enoyl-[ACP] + H2O</text>
        <dbReference type="Rhea" id="RHEA:13097"/>
        <dbReference type="Rhea" id="RHEA-COMP:9925"/>
        <dbReference type="Rhea" id="RHEA-COMP:9945"/>
        <dbReference type="ChEBI" id="CHEBI:15377"/>
        <dbReference type="ChEBI" id="CHEBI:78784"/>
        <dbReference type="ChEBI" id="CHEBI:78827"/>
        <dbReference type="EC" id="4.2.1.59"/>
    </reaction>
</comment>
<comment type="subcellular location">
    <subcellularLocation>
        <location evidence="1">Cytoplasm</location>
    </subcellularLocation>
</comment>
<comment type="similarity">
    <text evidence="1">Belongs to the thioester dehydratase family. FabZ subfamily.</text>
</comment>
<accession>B0CD44</accession>
<reference key="1">
    <citation type="journal article" date="2008" name="Proc. Natl. Acad. Sci. U.S.A.">
        <title>Niche adaptation and genome expansion in the chlorophyll d-producing cyanobacterium Acaryochloris marina.</title>
        <authorList>
            <person name="Swingley W.D."/>
            <person name="Chen M."/>
            <person name="Cheung P.C."/>
            <person name="Conrad A.L."/>
            <person name="Dejesa L.C."/>
            <person name="Hao J."/>
            <person name="Honchak B.M."/>
            <person name="Karbach L.E."/>
            <person name="Kurdoglu A."/>
            <person name="Lahiri S."/>
            <person name="Mastrian S.D."/>
            <person name="Miyashita H."/>
            <person name="Page L."/>
            <person name="Ramakrishna P."/>
            <person name="Satoh S."/>
            <person name="Sattley W.M."/>
            <person name="Shimada Y."/>
            <person name="Taylor H.L."/>
            <person name="Tomo T."/>
            <person name="Tsuchiya T."/>
            <person name="Wang Z.T."/>
            <person name="Raymond J."/>
            <person name="Mimuro M."/>
            <person name="Blankenship R.E."/>
            <person name="Touchman J.W."/>
        </authorList>
    </citation>
    <scope>NUCLEOTIDE SEQUENCE [LARGE SCALE GENOMIC DNA]</scope>
    <source>
        <strain>MBIC 11017</strain>
    </source>
</reference>
<protein>
    <recommendedName>
        <fullName evidence="1">3-hydroxyacyl-[acyl-carrier-protein] dehydratase FabZ</fullName>
        <ecNumber evidence="1">4.2.1.59</ecNumber>
    </recommendedName>
    <alternativeName>
        <fullName evidence="1">(3R)-hydroxymyristoyl-[acyl-carrier-protein] dehydratase</fullName>
        <shortName evidence="1">(3R)-hydroxymyristoyl-ACP dehydrase</shortName>
    </alternativeName>
    <alternativeName>
        <fullName evidence="1">Beta-hydroxyacyl-ACP dehydratase</fullName>
    </alternativeName>
</protein>
<name>FABZ_ACAM1</name>
<dbReference type="EC" id="4.2.1.59" evidence="1"/>
<dbReference type="EMBL" id="CP000828">
    <property type="protein sequence ID" value="ABW25635.1"/>
    <property type="molecule type" value="Genomic_DNA"/>
</dbReference>
<dbReference type="RefSeq" id="WP_012161234.1">
    <property type="nucleotide sequence ID" value="NC_009925.1"/>
</dbReference>
<dbReference type="SMR" id="B0CD44"/>
<dbReference type="STRING" id="329726.AM1_0584"/>
<dbReference type="KEGG" id="amr:AM1_0584"/>
<dbReference type="eggNOG" id="COG0764">
    <property type="taxonomic scope" value="Bacteria"/>
</dbReference>
<dbReference type="HOGENOM" id="CLU_078912_1_1_3"/>
<dbReference type="OrthoDB" id="9772788at2"/>
<dbReference type="Proteomes" id="UP000000268">
    <property type="component" value="Chromosome"/>
</dbReference>
<dbReference type="GO" id="GO:0005737">
    <property type="term" value="C:cytoplasm"/>
    <property type="evidence" value="ECO:0007669"/>
    <property type="project" value="UniProtKB-SubCell"/>
</dbReference>
<dbReference type="GO" id="GO:0016020">
    <property type="term" value="C:membrane"/>
    <property type="evidence" value="ECO:0007669"/>
    <property type="project" value="GOC"/>
</dbReference>
<dbReference type="GO" id="GO:0019171">
    <property type="term" value="F:(3R)-hydroxyacyl-[acyl-carrier-protein] dehydratase activity"/>
    <property type="evidence" value="ECO:0007669"/>
    <property type="project" value="UniProtKB-EC"/>
</dbReference>
<dbReference type="GO" id="GO:0006633">
    <property type="term" value="P:fatty acid biosynthetic process"/>
    <property type="evidence" value="ECO:0007669"/>
    <property type="project" value="UniProtKB-UniRule"/>
</dbReference>
<dbReference type="GO" id="GO:0009245">
    <property type="term" value="P:lipid A biosynthetic process"/>
    <property type="evidence" value="ECO:0007669"/>
    <property type="project" value="UniProtKB-UniRule"/>
</dbReference>
<dbReference type="CDD" id="cd01288">
    <property type="entry name" value="FabZ"/>
    <property type="match status" value="1"/>
</dbReference>
<dbReference type="FunFam" id="3.10.129.10:FF:000001">
    <property type="entry name" value="3-hydroxyacyl-[acyl-carrier-protein] dehydratase FabZ"/>
    <property type="match status" value="1"/>
</dbReference>
<dbReference type="Gene3D" id="3.10.129.10">
    <property type="entry name" value="Hotdog Thioesterase"/>
    <property type="match status" value="1"/>
</dbReference>
<dbReference type="HAMAP" id="MF_00406">
    <property type="entry name" value="FabZ"/>
    <property type="match status" value="1"/>
</dbReference>
<dbReference type="InterPro" id="IPR013114">
    <property type="entry name" value="FabA_FabZ"/>
</dbReference>
<dbReference type="InterPro" id="IPR010084">
    <property type="entry name" value="FabZ"/>
</dbReference>
<dbReference type="InterPro" id="IPR029069">
    <property type="entry name" value="HotDog_dom_sf"/>
</dbReference>
<dbReference type="NCBIfam" id="TIGR01750">
    <property type="entry name" value="fabZ"/>
    <property type="match status" value="1"/>
</dbReference>
<dbReference type="NCBIfam" id="NF000582">
    <property type="entry name" value="PRK00006.1"/>
    <property type="match status" value="1"/>
</dbReference>
<dbReference type="PANTHER" id="PTHR30272">
    <property type="entry name" value="3-HYDROXYACYL-[ACYL-CARRIER-PROTEIN] DEHYDRATASE"/>
    <property type="match status" value="1"/>
</dbReference>
<dbReference type="PANTHER" id="PTHR30272:SF1">
    <property type="entry name" value="3-HYDROXYACYL-[ACYL-CARRIER-PROTEIN] DEHYDRATASE"/>
    <property type="match status" value="1"/>
</dbReference>
<dbReference type="Pfam" id="PF07977">
    <property type="entry name" value="FabA"/>
    <property type="match status" value="1"/>
</dbReference>
<dbReference type="SUPFAM" id="SSF54637">
    <property type="entry name" value="Thioesterase/thiol ester dehydrase-isomerase"/>
    <property type="match status" value="1"/>
</dbReference>
<keyword id="KW-0963">Cytoplasm</keyword>
<keyword id="KW-0441">Lipid A biosynthesis</keyword>
<keyword id="KW-0444">Lipid biosynthesis</keyword>
<keyword id="KW-0443">Lipid metabolism</keyword>
<keyword id="KW-0456">Lyase</keyword>
<keyword id="KW-1185">Reference proteome</keyword>
<feature type="chain" id="PRO_1000134679" description="3-hydroxyacyl-[acyl-carrier-protein] dehydratase FabZ">
    <location>
        <begin position="1"/>
        <end position="156"/>
    </location>
</feature>
<feature type="active site" evidence="1">
    <location>
        <position position="61"/>
    </location>
</feature>
<gene>
    <name evidence="1" type="primary">fabZ</name>
    <name type="ordered locus">AM1_0584</name>
</gene>
<evidence type="ECO:0000255" key="1">
    <source>
        <dbReference type="HAMAP-Rule" id="MF_00406"/>
    </source>
</evidence>
<organism>
    <name type="scientific">Acaryochloris marina (strain MBIC 11017)</name>
    <dbReference type="NCBI Taxonomy" id="329726"/>
    <lineage>
        <taxon>Bacteria</taxon>
        <taxon>Bacillati</taxon>
        <taxon>Cyanobacteriota</taxon>
        <taxon>Cyanophyceae</taxon>
        <taxon>Acaryochloridales</taxon>
        <taxon>Acaryochloridaceae</taxon>
        <taxon>Acaryochloris</taxon>
    </lineage>
</organism>
<proteinExistence type="inferred from homology"/>
<sequence>MSNPSDGSTDPKTTFMIEEIQELLPHRYPFLLVDRIIDYKESERAVGIKNVTMNEEFFQGHFPGRPLMPGVLIVEAMAQVGGIVLAQLPDIPSGKLFVFTGIDKVRIRRSVVPGDQLVITAEFLSLKRKRFAMMSTKAEVDGKLACSGELMFAMVD</sequence>